<reference key="1">
    <citation type="journal article" date="2009" name="Appl. Environ. Microbiol.">
        <title>Complete genome sequence of the chemolithoautotrophic marine magnetotactic coccus strain MC-1.</title>
        <authorList>
            <person name="Schubbe S."/>
            <person name="Williams T.J."/>
            <person name="Xie G."/>
            <person name="Kiss H.E."/>
            <person name="Brettin T.S."/>
            <person name="Martinez D."/>
            <person name="Ross C.A."/>
            <person name="Schuler D."/>
            <person name="Cox B.L."/>
            <person name="Nealson K.H."/>
            <person name="Bazylinski D.A."/>
        </authorList>
    </citation>
    <scope>NUCLEOTIDE SEQUENCE [LARGE SCALE GENOMIC DNA]</scope>
    <source>
        <strain>ATCC BAA-1437 / JCM 17883 / MC-1</strain>
    </source>
</reference>
<evidence type="ECO:0000255" key="1">
    <source>
        <dbReference type="HAMAP-Rule" id="MF_01527"/>
    </source>
</evidence>
<organism>
    <name type="scientific">Magnetococcus marinus (strain ATCC BAA-1437 / JCM 17883 / MC-1)</name>
    <dbReference type="NCBI Taxonomy" id="156889"/>
    <lineage>
        <taxon>Bacteria</taxon>
        <taxon>Pseudomonadati</taxon>
        <taxon>Pseudomonadota</taxon>
        <taxon>Alphaproteobacteria</taxon>
        <taxon>Magnetococcales</taxon>
        <taxon>Magnetococcaceae</taxon>
        <taxon>Magnetococcus</taxon>
    </lineage>
</organism>
<dbReference type="EC" id="3.5.4.16" evidence="1"/>
<dbReference type="EMBL" id="CP000471">
    <property type="protein sequence ID" value="ABK44274.1"/>
    <property type="molecule type" value="Genomic_DNA"/>
</dbReference>
<dbReference type="RefSeq" id="WP_011713421.1">
    <property type="nucleotide sequence ID" value="NC_008576.1"/>
</dbReference>
<dbReference type="SMR" id="A0L8I1"/>
<dbReference type="STRING" id="156889.Mmc1_1766"/>
<dbReference type="KEGG" id="mgm:Mmc1_1766"/>
<dbReference type="eggNOG" id="COG1469">
    <property type="taxonomic scope" value="Bacteria"/>
</dbReference>
<dbReference type="HOGENOM" id="CLU_062816_1_1_5"/>
<dbReference type="OrthoDB" id="239637at2"/>
<dbReference type="UniPathway" id="UPA00848">
    <property type="reaction ID" value="UER00151"/>
</dbReference>
<dbReference type="Proteomes" id="UP000002586">
    <property type="component" value="Chromosome"/>
</dbReference>
<dbReference type="GO" id="GO:0003934">
    <property type="term" value="F:GTP cyclohydrolase I activity"/>
    <property type="evidence" value="ECO:0007669"/>
    <property type="project" value="UniProtKB-UniRule"/>
</dbReference>
<dbReference type="GO" id="GO:0046654">
    <property type="term" value="P:tetrahydrofolate biosynthetic process"/>
    <property type="evidence" value="ECO:0007669"/>
    <property type="project" value="UniProtKB-UniRule"/>
</dbReference>
<dbReference type="Gene3D" id="3.10.270.10">
    <property type="entry name" value="Urate Oxidase"/>
    <property type="match status" value="1"/>
</dbReference>
<dbReference type="HAMAP" id="MF_01527_B">
    <property type="entry name" value="GTP_cyclohydrol_B"/>
    <property type="match status" value="1"/>
</dbReference>
<dbReference type="InterPro" id="IPR022838">
    <property type="entry name" value="GTP_cyclohydrolase_FolE2"/>
</dbReference>
<dbReference type="InterPro" id="IPR003801">
    <property type="entry name" value="GTP_cyclohydrolase_FolE2/MptA"/>
</dbReference>
<dbReference type="NCBIfam" id="NF010200">
    <property type="entry name" value="PRK13674.1-1"/>
    <property type="match status" value="1"/>
</dbReference>
<dbReference type="PANTHER" id="PTHR36445">
    <property type="entry name" value="GTP CYCLOHYDROLASE MPTA"/>
    <property type="match status" value="1"/>
</dbReference>
<dbReference type="PANTHER" id="PTHR36445:SF1">
    <property type="entry name" value="GTP CYCLOHYDROLASE MPTA"/>
    <property type="match status" value="1"/>
</dbReference>
<dbReference type="Pfam" id="PF02649">
    <property type="entry name" value="GCHY-1"/>
    <property type="match status" value="1"/>
</dbReference>
<name>GCH4_MAGMM</name>
<gene>
    <name evidence="1" type="primary">folE2</name>
    <name type="ordered locus">Mmc1_1766</name>
</gene>
<comment type="function">
    <text evidence="1">Converts GTP to 7,8-dihydroneopterin triphosphate.</text>
</comment>
<comment type="catalytic activity">
    <reaction evidence="1">
        <text>GTP + H2O = 7,8-dihydroneopterin 3'-triphosphate + formate + H(+)</text>
        <dbReference type="Rhea" id="RHEA:17473"/>
        <dbReference type="ChEBI" id="CHEBI:15377"/>
        <dbReference type="ChEBI" id="CHEBI:15378"/>
        <dbReference type="ChEBI" id="CHEBI:15740"/>
        <dbReference type="ChEBI" id="CHEBI:37565"/>
        <dbReference type="ChEBI" id="CHEBI:58462"/>
        <dbReference type="EC" id="3.5.4.16"/>
    </reaction>
</comment>
<comment type="pathway">
    <text evidence="1">Cofactor biosynthesis; 7,8-dihydroneopterin triphosphate biosynthesis; 7,8-dihydroneopterin triphosphate from GTP: step 1/1.</text>
</comment>
<comment type="similarity">
    <text evidence="1">Belongs to the GTP cyclohydrolase IV family.</text>
</comment>
<protein>
    <recommendedName>
        <fullName evidence="1">GTP cyclohydrolase FolE2</fullName>
        <ecNumber evidence="1">3.5.4.16</ecNumber>
    </recommendedName>
</protein>
<keyword id="KW-0378">Hydrolase</keyword>
<keyword id="KW-1185">Reference proteome</keyword>
<sequence length="265" mass="30401">MNNCQLPLSDVQSRQDHRRLDIDKVGVKNIRYPIVVKDRSVGSQSTTARINMYVNLPHQFKGTHMSRFLEVLAENQRAISIENLPKLLKEVKQRLDAEEAHIELDFPYFITKKAPVSGVEALMDYQVHFSGVMRGNAYQLTLTVEVPVTSLCPCSKEISAYGAHNQRSHVKVSVQFSQFVWIEEVVDLVERNASCELFTILKRPDEKFVTEKAYDNPKFVEDMVRDLADELTHDPRISWFAVESENFESIHNHSAYAFIEGGQRS</sequence>
<proteinExistence type="inferred from homology"/>
<feature type="chain" id="PRO_0000289496" description="GTP cyclohydrolase FolE2">
    <location>
        <begin position="1"/>
        <end position="265"/>
    </location>
</feature>
<feature type="site" description="May be catalytically important" evidence="1">
    <location>
        <position position="152"/>
    </location>
</feature>
<accession>A0L8I1</accession>